<organism>
    <name type="scientific">Escherichia coli O157:H7</name>
    <dbReference type="NCBI Taxonomy" id="83334"/>
    <lineage>
        <taxon>Bacteria</taxon>
        <taxon>Pseudomonadati</taxon>
        <taxon>Pseudomonadota</taxon>
        <taxon>Gammaproteobacteria</taxon>
        <taxon>Enterobacterales</taxon>
        <taxon>Enterobacteriaceae</taxon>
        <taxon>Escherichia</taxon>
    </lineage>
</organism>
<proteinExistence type="inferred from homology"/>
<protein>
    <recommendedName>
        <fullName evidence="1">LPS-assembly protein LptD</fullName>
    </recommendedName>
</protein>
<reference key="1">
    <citation type="journal article" date="2001" name="Nature">
        <title>Genome sequence of enterohaemorrhagic Escherichia coli O157:H7.</title>
        <authorList>
            <person name="Perna N.T."/>
            <person name="Plunkett G. III"/>
            <person name="Burland V."/>
            <person name="Mau B."/>
            <person name="Glasner J.D."/>
            <person name="Rose D.J."/>
            <person name="Mayhew G.F."/>
            <person name="Evans P.S."/>
            <person name="Gregor J."/>
            <person name="Kirkpatrick H.A."/>
            <person name="Posfai G."/>
            <person name="Hackett J."/>
            <person name="Klink S."/>
            <person name="Boutin A."/>
            <person name="Shao Y."/>
            <person name="Miller L."/>
            <person name="Grotbeck E.J."/>
            <person name="Davis N.W."/>
            <person name="Lim A."/>
            <person name="Dimalanta E.T."/>
            <person name="Potamousis K."/>
            <person name="Apodaca J."/>
            <person name="Anantharaman T.S."/>
            <person name="Lin J."/>
            <person name="Yen G."/>
            <person name="Schwartz D.C."/>
            <person name="Welch R.A."/>
            <person name="Blattner F.R."/>
        </authorList>
    </citation>
    <scope>NUCLEOTIDE SEQUENCE [LARGE SCALE GENOMIC DNA]</scope>
    <source>
        <strain>O157:H7 / EDL933 / ATCC 700927 / EHEC</strain>
    </source>
</reference>
<reference key="2">
    <citation type="journal article" date="2001" name="DNA Res.">
        <title>Complete genome sequence of enterohemorrhagic Escherichia coli O157:H7 and genomic comparison with a laboratory strain K-12.</title>
        <authorList>
            <person name="Hayashi T."/>
            <person name="Makino K."/>
            <person name="Ohnishi M."/>
            <person name="Kurokawa K."/>
            <person name="Ishii K."/>
            <person name="Yokoyama K."/>
            <person name="Han C.-G."/>
            <person name="Ohtsubo E."/>
            <person name="Nakayama K."/>
            <person name="Murata T."/>
            <person name="Tanaka M."/>
            <person name="Tobe T."/>
            <person name="Iida T."/>
            <person name="Takami H."/>
            <person name="Honda T."/>
            <person name="Sasakawa C."/>
            <person name="Ogasawara N."/>
            <person name="Yasunaga T."/>
            <person name="Kuhara S."/>
            <person name="Shiba T."/>
            <person name="Hattori M."/>
            <person name="Shinagawa H."/>
        </authorList>
    </citation>
    <scope>NUCLEOTIDE SEQUENCE [LARGE SCALE GENOMIC DNA]</scope>
    <source>
        <strain>O157:H7 / Sakai / RIMD 0509952 / EHEC</strain>
    </source>
</reference>
<gene>
    <name evidence="1" type="primary">lptD</name>
    <name type="synonym">imp</name>
    <name type="synonym">ostA</name>
    <name type="ordered locus">Z0063</name>
    <name type="ordered locus">ECs0059</name>
</gene>
<dbReference type="EMBL" id="AE005174">
    <property type="protein sequence ID" value="AAG54359.1"/>
    <property type="molecule type" value="Genomic_DNA"/>
</dbReference>
<dbReference type="EMBL" id="BA000007">
    <property type="protein sequence ID" value="BAB33482.1"/>
    <property type="molecule type" value="Genomic_DNA"/>
</dbReference>
<dbReference type="PIR" id="C85487">
    <property type="entry name" value="C85487"/>
</dbReference>
<dbReference type="PIR" id="C90636">
    <property type="entry name" value="C90636"/>
</dbReference>
<dbReference type="RefSeq" id="NP_308086.1">
    <property type="nucleotide sequence ID" value="NC_002695.1"/>
</dbReference>
<dbReference type="RefSeq" id="WP_000746183.1">
    <property type="nucleotide sequence ID" value="NZ_VOAI01000002.1"/>
</dbReference>
<dbReference type="SMR" id="Q8XA13"/>
<dbReference type="STRING" id="155864.Z0063"/>
<dbReference type="GeneID" id="913459"/>
<dbReference type="KEGG" id="ece:Z0063"/>
<dbReference type="KEGG" id="ecs:ECs_0059"/>
<dbReference type="PATRIC" id="fig|386585.9.peg.158"/>
<dbReference type="eggNOG" id="COG1452">
    <property type="taxonomic scope" value="Bacteria"/>
</dbReference>
<dbReference type="HOGENOM" id="CLU_009039_2_0_6"/>
<dbReference type="OMA" id="DYSHLDW"/>
<dbReference type="Proteomes" id="UP000000558">
    <property type="component" value="Chromosome"/>
</dbReference>
<dbReference type="Proteomes" id="UP000002519">
    <property type="component" value="Chromosome"/>
</dbReference>
<dbReference type="GO" id="GO:0009279">
    <property type="term" value="C:cell outer membrane"/>
    <property type="evidence" value="ECO:0007669"/>
    <property type="project" value="UniProtKB-SubCell"/>
</dbReference>
<dbReference type="GO" id="GO:1990351">
    <property type="term" value="C:transporter complex"/>
    <property type="evidence" value="ECO:0007669"/>
    <property type="project" value="TreeGrafter"/>
</dbReference>
<dbReference type="GO" id="GO:0043165">
    <property type="term" value="P:Gram-negative-bacterium-type cell outer membrane assembly"/>
    <property type="evidence" value="ECO:0007669"/>
    <property type="project" value="UniProtKB-UniRule"/>
</dbReference>
<dbReference type="GO" id="GO:0015920">
    <property type="term" value="P:lipopolysaccharide transport"/>
    <property type="evidence" value="ECO:0007669"/>
    <property type="project" value="InterPro"/>
</dbReference>
<dbReference type="FunFam" id="2.60.450.10:FF:000003">
    <property type="entry name" value="LPS-assembly protein LptD"/>
    <property type="match status" value="1"/>
</dbReference>
<dbReference type="Gene3D" id="2.60.450.10">
    <property type="entry name" value="Lipopolysaccharide (LPS) transport protein A like domain"/>
    <property type="match status" value="1"/>
</dbReference>
<dbReference type="HAMAP" id="MF_01411">
    <property type="entry name" value="LPS_assembly_LptD"/>
    <property type="match status" value="1"/>
</dbReference>
<dbReference type="InterPro" id="IPR020889">
    <property type="entry name" value="LipoPS_assembly_LptD"/>
</dbReference>
<dbReference type="InterPro" id="IPR050218">
    <property type="entry name" value="LptD"/>
</dbReference>
<dbReference type="InterPro" id="IPR007543">
    <property type="entry name" value="LptD_C"/>
</dbReference>
<dbReference type="InterPro" id="IPR005653">
    <property type="entry name" value="OstA-like_N"/>
</dbReference>
<dbReference type="NCBIfam" id="NF002997">
    <property type="entry name" value="PRK03761.1"/>
    <property type="match status" value="1"/>
</dbReference>
<dbReference type="PANTHER" id="PTHR30189">
    <property type="entry name" value="LPS-ASSEMBLY PROTEIN"/>
    <property type="match status" value="1"/>
</dbReference>
<dbReference type="PANTHER" id="PTHR30189:SF1">
    <property type="entry name" value="LPS-ASSEMBLY PROTEIN LPTD"/>
    <property type="match status" value="1"/>
</dbReference>
<dbReference type="Pfam" id="PF04453">
    <property type="entry name" value="LptD"/>
    <property type="match status" value="1"/>
</dbReference>
<dbReference type="Pfam" id="PF03968">
    <property type="entry name" value="LptD_N"/>
    <property type="match status" value="1"/>
</dbReference>
<name>LPTD_ECO57</name>
<accession>Q8XA13</accession>
<comment type="function">
    <text evidence="1">Together with LptE, is involved in the assembly of lipopolysaccharide (LPS) at the surface of the outer membrane.</text>
</comment>
<comment type="subunit">
    <text evidence="1">Component of the lipopolysaccharide transport and assembly complex. Interacts with LptE and LptA.</text>
</comment>
<comment type="subcellular location">
    <subcellularLocation>
        <location evidence="1">Cell outer membrane</location>
    </subcellularLocation>
</comment>
<comment type="PTM">
    <text evidence="1">Contains two intramolecular disulfide bonds.</text>
</comment>
<comment type="similarity">
    <text evidence="1">Belongs to the LptD family.</text>
</comment>
<keyword id="KW-0998">Cell outer membrane</keyword>
<keyword id="KW-1015">Disulfide bond</keyword>
<keyword id="KW-0472">Membrane</keyword>
<keyword id="KW-1185">Reference proteome</keyword>
<keyword id="KW-0732">Signal</keyword>
<sequence>MKKRIPTLLATMIATALYSQQGLAADLASQCMLGVPSYDRPLVQGDTNDLPVTINANHAKGDYPDDAVFTGSVDIMQGNSRLQADEVQLHQKEAPGQPEPVRTVDALGNVHYDDNQVILKGPKGWANLNTKDTNVWEGDYQMVGRQGRGKADLMKQRGENRYTILDNGSFTSCLPGSDTWSVVGSEIIHDREEQVAEIWNARFKVGPVSIFYSPYLQLPVGDKRRSGFLIPNAKYTTTNYFEFYLPYYWNIAPNMDATITPHYMHRRGNIMWENEFRYLSQAGAGLMELDYLPSDKVYEDEHPNDDSSRRWLFYWNHSGVMDQVWRFNVDYTKVSDPSYFNDFDNKYGSSTDGYATQKFSVGYAVQNFNATVSTKQFQVFSEQNTSSYSAEPQLDVNYYQNDVGPFDTRIYGQAVHFVNTRDDMPEATRVHLEPTINLPLSNNWGSINTEAKLLATHYQQTNLDWYNSRNTTKLDESVNRVMPQFKVDGKMVFERDMEMLAPGYTQTLEPRAQYLYVPYRDQSDIYNYDSSLLQSDYSGLFRDRTYGGLDRIASANQVTTGVTSRIYDDAAVERFNISVGQIYYFTESRTGDDNITWENDDKTGSLVWAGDTYWRISERWGLRGGIQYDTRLDNVATSNSSIEYRRDEDRLVQLNYRYASPEYIQATLPKYYSTAEQYKNGISQVGAVASWPIADRWSIVGAYYYDTNANKQADSMLGVQYSSCCYAIRVGYERKLNGWDNDKQHAVYDNAIGFNIELRGLSSNYGLGTQEMLRSNILPYQNTL</sequence>
<feature type="signal peptide" evidence="1">
    <location>
        <begin position="1"/>
        <end position="24"/>
    </location>
</feature>
<feature type="chain" id="PRO_0000020278" description="LPS-assembly protein LptD">
    <location>
        <begin position="25"/>
        <end position="784"/>
    </location>
</feature>
<feature type="disulfide bond" evidence="1">
    <location>
        <begin position="31"/>
        <end position="724"/>
    </location>
</feature>
<feature type="disulfide bond" evidence="1">
    <location>
        <begin position="173"/>
        <end position="725"/>
    </location>
</feature>
<evidence type="ECO:0000255" key="1">
    <source>
        <dbReference type="HAMAP-Rule" id="MF_01411"/>
    </source>
</evidence>